<keyword id="KW-0030">Aminoacyl-tRNA synthetase</keyword>
<keyword id="KW-0067">ATP-binding</keyword>
<keyword id="KW-0963">Cytoplasm</keyword>
<keyword id="KW-0436">Ligase</keyword>
<keyword id="KW-0547">Nucleotide-binding</keyword>
<keyword id="KW-0648">Protein biosynthesis</keyword>
<accession>B0TWR5</accession>
<comment type="catalytic activity">
    <reaction evidence="1">
        <text>tRNA(His) + L-histidine + ATP = L-histidyl-tRNA(His) + AMP + diphosphate + H(+)</text>
        <dbReference type="Rhea" id="RHEA:17313"/>
        <dbReference type="Rhea" id="RHEA-COMP:9665"/>
        <dbReference type="Rhea" id="RHEA-COMP:9689"/>
        <dbReference type="ChEBI" id="CHEBI:15378"/>
        <dbReference type="ChEBI" id="CHEBI:30616"/>
        <dbReference type="ChEBI" id="CHEBI:33019"/>
        <dbReference type="ChEBI" id="CHEBI:57595"/>
        <dbReference type="ChEBI" id="CHEBI:78442"/>
        <dbReference type="ChEBI" id="CHEBI:78527"/>
        <dbReference type="ChEBI" id="CHEBI:456215"/>
        <dbReference type="EC" id="6.1.1.21"/>
    </reaction>
</comment>
<comment type="subunit">
    <text evidence="1">Homodimer.</text>
</comment>
<comment type="subcellular location">
    <subcellularLocation>
        <location evidence="1">Cytoplasm</location>
    </subcellularLocation>
</comment>
<comment type="similarity">
    <text evidence="1">Belongs to the class-II aminoacyl-tRNA synthetase family.</text>
</comment>
<reference key="1">
    <citation type="submission" date="2007-12" db="EMBL/GenBank/DDBJ databases">
        <title>Complete sequence of chromosome of Francisella philomiragia subsp. philomiragia ATCC 25017.</title>
        <authorList>
            <consortium name="US DOE Joint Genome Institute"/>
            <person name="Copeland A."/>
            <person name="Lucas S."/>
            <person name="Lapidus A."/>
            <person name="Barry K."/>
            <person name="Detter J.C."/>
            <person name="Glavina del Rio T."/>
            <person name="Hammon N."/>
            <person name="Israni S."/>
            <person name="Dalin E."/>
            <person name="Tice H."/>
            <person name="Pitluck S."/>
            <person name="Chain P."/>
            <person name="Malfatti S."/>
            <person name="Shin M."/>
            <person name="Vergez L."/>
            <person name="Schmutz J."/>
            <person name="Larimer F."/>
            <person name="Land M."/>
            <person name="Hauser L."/>
            <person name="Richardson P."/>
        </authorList>
    </citation>
    <scope>NUCLEOTIDE SEQUENCE [LARGE SCALE GENOMIC DNA]</scope>
    <source>
        <strain>ATCC 25017 / CCUG 19701 / FSC 153 / O#319-036</strain>
    </source>
</reference>
<dbReference type="EC" id="6.1.1.21" evidence="1"/>
<dbReference type="EMBL" id="CP000937">
    <property type="protein sequence ID" value="ABZ87173.1"/>
    <property type="molecule type" value="Genomic_DNA"/>
</dbReference>
<dbReference type="SMR" id="B0TWR5"/>
<dbReference type="KEGG" id="fph:Fphi_0950"/>
<dbReference type="eggNOG" id="COG0124">
    <property type="taxonomic scope" value="Bacteria"/>
</dbReference>
<dbReference type="HOGENOM" id="CLU_025113_1_1_6"/>
<dbReference type="GO" id="GO:0005737">
    <property type="term" value="C:cytoplasm"/>
    <property type="evidence" value="ECO:0007669"/>
    <property type="project" value="UniProtKB-SubCell"/>
</dbReference>
<dbReference type="GO" id="GO:0005524">
    <property type="term" value="F:ATP binding"/>
    <property type="evidence" value="ECO:0007669"/>
    <property type="project" value="UniProtKB-UniRule"/>
</dbReference>
<dbReference type="GO" id="GO:0004821">
    <property type="term" value="F:histidine-tRNA ligase activity"/>
    <property type="evidence" value="ECO:0007669"/>
    <property type="project" value="UniProtKB-UniRule"/>
</dbReference>
<dbReference type="GO" id="GO:0006427">
    <property type="term" value="P:histidyl-tRNA aminoacylation"/>
    <property type="evidence" value="ECO:0007669"/>
    <property type="project" value="UniProtKB-UniRule"/>
</dbReference>
<dbReference type="CDD" id="cd00773">
    <property type="entry name" value="HisRS-like_core"/>
    <property type="match status" value="1"/>
</dbReference>
<dbReference type="FunFam" id="3.30.930.10:FF:000005">
    <property type="entry name" value="Histidine--tRNA ligase"/>
    <property type="match status" value="1"/>
</dbReference>
<dbReference type="Gene3D" id="3.40.50.800">
    <property type="entry name" value="Anticodon-binding domain"/>
    <property type="match status" value="1"/>
</dbReference>
<dbReference type="Gene3D" id="3.30.930.10">
    <property type="entry name" value="Bira Bifunctional Protein, Domain 2"/>
    <property type="match status" value="1"/>
</dbReference>
<dbReference type="HAMAP" id="MF_00127">
    <property type="entry name" value="His_tRNA_synth"/>
    <property type="match status" value="1"/>
</dbReference>
<dbReference type="InterPro" id="IPR006195">
    <property type="entry name" value="aa-tRNA-synth_II"/>
</dbReference>
<dbReference type="InterPro" id="IPR045864">
    <property type="entry name" value="aa-tRNA-synth_II/BPL/LPL"/>
</dbReference>
<dbReference type="InterPro" id="IPR004154">
    <property type="entry name" value="Anticodon-bd"/>
</dbReference>
<dbReference type="InterPro" id="IPR036621">
    <property type="entry name" value="Anticodon-bd_dom_sf"/>
</dbReference>
<dbReference type="InterPro" id="IPR015807">
    <property type="entry name" value="His-tRNA-ligase"/>
</dbReference>
<dbReference type="InterPro" id="IPR041715">
    <property type="entry name" value="HisRS-like_core"/>
</dbReference>
<dbReference type="InterPro" id="IPR004516">
    <property type="entry name" value="HisRS/HisZ"/>
</dbReference>
<dbReference type="NCBIfam" id="TIGR00442">
    <property type="entry name" value="hisS"/>
    <property type="match status" value="1"/>
</dbReference>
<dbReference type="PANTHER" id="PTHR43707:SF1">
    <property type="entry name" value="HISTIDINE--TRNA LIGASE, MITOCHONDRIAL-RELATED"/>
    <property type="match status" value="1"/>
</dbReference>
<dbReference type="PANTHER" id="PTHR43707">
    <property type="entry name" value="HISTIDYL-TRNA SYNTHETASE"/>
    <property type="match status" value="1"/>
</dbReference>
<dbReference type="Pfam" id="PF03129">
    <property type="entry name" value="HGTP_anticodon"/>
    <property type="match status" value="1"/>
</dbReference>
<dbReference type="Pfam" id="PF13393">
    <property type="entry name" value="tRNA-synt_His"/>
    <property type="match status" value="1"/>
</dbReference>
<dbReference type="PIRSF" id="PIRSF001549">
    <property type="entry name" value="His-tRNA_synth"/>
    <property type="match status" value="1"/>
</dbReference>
<dbReference type="SUPFAM" id="SSF52954">
    <property type="entry name" value="Class II aaRS ABD-related"/>
    <property type="match status" value="1"/>
</dbReference>
<dbReference type="SUPFAM" id="SSF55681">
    <property type="entry name" value="Class II aaRS and biotin synthetases"/>
    <property type="match status" value="1"/>
</dbReference>
<dbReference type="PROSITE" id="PS50862">
    <property type="entry name" value="AA_TRNA_LIGASE_II"/>
    <property type="match status" value="1"/>
</dbReference>
<feature type="chain" id="PRO_1000076272" description="Histidine--tRNA ligase">
    <location>
        <begin position="1"/>
        <end position="424"/>
    </location>
</feature>
<protein>
    <recommendedName>
        <fullName evidence="1">Histidine--tRNA ligase</fullName>
        <ecNumber evidence="1">6.1.1.21</ecNumber>
    </recommendedName>
    <alternativeName>
        <fullName evidence="1">Histidyl-tRNA synthetase</fullName>
        <shortName evidence="1">HisRS</shortName>
    </alternativeName>
</protein>
<evidence type="ECO:0000255" key="1">
    <source>
        <dbReference type="HAMAP-Rule" id="MF_00127"/>
    </source>
</evidence>
<gene>
    <name evidence="1" type="primary">hisS</name>
    <name type="ordered locus">Fphi_0950</name>
</gene>
<proteinExistence type="inferred from homology"/>
<sequence length="424" mass="48526">MSKLTIIRGFNDILPQESCKWQFLESKIKSILDKYNYDEVRLPVLEKSELFHRSVGETSDIVSKETYDFVDRSGESLTLRPEGTAGCVRMVIENSLANRGQTQKLWYSGPMFRYERPQKGRYRQFYQLGVEAYGYDNIAIDLEILTISWNLFRELGISECVKLELNSLGSSSNRQEYTKALLEYLKPYHAQLDEDSIKRLDKNPLRILDSKNEQTQQVLANAPKLIDFIDEDSLTRFEQTCEYLDNLGVNYQVNQKLVRGLDYYSGLVFEWVTDRLGAQAAVCAGGRYDNLIESLGGQKAGAIGFAIGLERLLLLLESEGKLPIEDDKSDVFFILDNNQLHRSLLLVENVRQELPALKIDMDLKFGSFKSQFKKADKSDAKIAVIIGQDELLQQAVGVKYLQQDKQQEQIPLNKLINFLEKIAI</sequence>
<organism>
    <name type="scientific">Francisella philomiragia subsp. philomiragia (strain ATCC 25017 / CCUG 19701 / FSC 153 / O#319-036)</name>
    <dbReference type="NCBI Taxonomy" id="484022"/>
    <lineage>
        <taxon>Bacteria</taxon>
        <taxon>Pseudomonadati</taxon>
        <taxon>Pseudomonadota</taxon>
        <taxon>Gammaproteobacteria</taxon>
        <taxon>Thiotrichales</taxon>
        <taxon>Francisellaceae</taxon>
        <taxon>Francisella</taxon>
    </lineage>
</organism>
<name>SYH_FRAP2</name>